<comment type="catalytic activity">
    <reaction evidence="1">
        <text>tRNA(Cys) + L-cysteine + ATP = L-cysteinyl-tRNA(Cys) + AMP + diphosphate</text>
        <dbReference type="Rhea" id="RHEA:17773"/>
        <dbReference type="Rhea" id="RHEA-COMP:9661"/>
        <dbReference type="Rhea" id="RHEA-COMP:9679"/>
        <dbReference type="ChEBI" id="CHEBI:30616"/>
        <dbReference type="ChEBI" id="CHEBI:33019"/>
        <dbReference type="ChEBI" id="CHEBI:35235"/>
        <dbReference type="ChEBI" id="CHEBI:78442"/>
        <dbReference type="ChEBI" id="CHEBI:78517"/>
        <dbReference type="ChEBI" id="CHEBI:456215"/>
        <dbReference type="EC" id="6.1.1.16"/>
    </reaction>
</comment>
<comment type="cofactor">
    <cofactor evidence="1">
        <name>Zn(2+)</name>
        <dbReference type="ChEBI" id="CHEBI:29105"/>
    </cofactor>
    <text evidence="1">Binds 1 zinc ion per subunit.</text>
</comment>
<comment type="subunit">
    <text evidence="1">Monomer.</text>
</comment>
<comment type="subcellular location">
    <subcellularLocation>
        <location evidence="1">Cytoplasm</location>
    </subcellularLocation>
</comment>
<comment type="similarity">
    <text evidence="1">Belongs to the class-I aminoacyl-tRNA synthetase family.</text>
</comment>
<reference key="1">
    <citation type="journal article" date="2007" name="Genome Biol.">
        <title>Comparison of Francisella tularensis genomes reveals evolutionary events associated with the emergence of human pathogenic strains.</title>
        <authorList>
            <person name="Rohmer L."/>
            <person name="Fong C."/>
            <person name="Abmayr S."/>
            <person name="Wasnick M."/>
            <person name="Larson Freeman T.J."/>
            <person name="Radey M."/>
            <person name="Guina T."/>
            <person name="Svensson K."/>
            <person name="Hayden H.S."/>
            <person name="Jacobs M."/>
            <person name="Gallagher L.A."/>
            <person name="Manoil C."/>
            <person name="Ernst R.K."/>
            <person name="Drees B."/>
            <person name="Buckley D."/>
            <person name="Haugen E."/>
            <person name="Bovee D."/>
            <person name="Zhou Y."/>
            <person name="Chang J."/>
            <person name="Levy R."/>
            <person name="Lim R."/>
            <person name="Gillett W."/>
            <person name="Guenthener D."/>
            <person name="Kang A."/>
            <person name="Shaffer S.A."/>
            <person name="Taylor G."/>
            <person name="Chen J."/>
            <person name="Gallis B."/>
            <person name="D'Argenio D.A."/>
            <person name="Forsman M."/>
            <person name="Olson M.V."/>
            <person name="Goodlett D.R."/>
            <person name="Kaul R."/>
            <person name="Miller S.I."/>
            <person name="Brittnacher M.J."/>
        </authorList>
    </citation>
    <scope>NUCLEOTIDE SEQUENCE [LARGE SCALE GENOMIC DNA]</scope>
    <source>
        <strain>U112</strain>
    </source>
</reference>
<dbReference type="EC" id="6.1.1.16" evidence="1"/>
<dbReference type="EMBL" id="CP000439">
    <property type="protein sequence ID" value="ABK89216.1"/>
    <property type="molecule type" value="Genomic_DNA"/>
</dbReference>
<dbReference type="SMR" id="A0Q4Q1"/>
<dbReference type="KEGG" id="ftn:FTN_0310"/>
<dbReference type="KEGG" id="ftx:AW25_1731"/>
<dbReference type="Proteomes" id="UP000000762">
    <property type="component" value="Chromosome"/>
</dbReference>
<dbReference type="GO" id="GO:0005829">
    <property type="term" value="C:cytosol"/>
    <property type="evidence" value="ECO:0007669"/>
    <property type="project" value="TreeGrafter"/>
</dbReference>
<dbReference type="GO" id="GO:0005524">
    <property type="term" value="F:ATP binding"/>
    <property type="evidence" value="ECO:0007669"/>
    <property type="project" value="UniProtKB-UniRule"/>
</dbReference>
<dbReference type="GO" id="GO:0004817">
    <property type="term" value="F:cysteine-tRNA ligase activity"/>
    <property type="evidence" value="ECO:0007669"/>
    <property type="project" value="UniProtKB-UniRule"/>
</dbReference>
<dbReference type="GO" id="GO:0008270">
    <property type="term" value="F:zinc ion binding"/>
    <property type="evidence" value="ECO:0007669"/>
    <property type="project" value="UniProtKB-UniRule"/>
</dbReference>
<dbReference type="GO" id="GO:0006423">
    <property type="term" value="P:cysteinyl-tRNA aminoacylation"/>
    <property type="evidence" value="ECO:0007669"/>
    <property type="project" value="UniProtKB-UniRule"/>
</dbReference>
<dbReference type="CDD" id="cd07963">
    <property type="entry name" value="Anticodon_Ia_Cys"/>
    <property type="match status" value="1"/>
</dbReference>
<dbReference type="CDD" id="cd00672">
    <property type="entry name" value="CysRS_core"/>
    <property type="match status" value="1"/>
</dbReference>
<dbReference type="FunFam" id="3.40.50.620:FF:000009">
    <property type="entry name" value="Cysteine--tRNA ligase"/>
    <property type="match status" value="1"/>
</dbReference>
<dbReference type="Gene3D" id="1.20.120.1910">
    <property type="entry name" value="Cysteine-tRNA ligase, C-terminal anti-codon recognition domain"/>
    <property type="match status" value="1"/>
</dbReference>
<dbReference type="Gene3D" id="3.40.50.620">
    <property type="entry name" value="HUPs"/>
    <property type="match status" value="1"/>
</dbReference>
<dbReference type="HAMAP" id="MF_00041">
    <property type="entry name" value="Cys_tRNA_synth"/>
    <property type="match status" value="1"/>
</dbReference>
<dbReference type="InterPro" id="IPR015803">
    <property type="entry name" value="Cys-tRNA-ligase"/>
</dbReference>
<dbReference type="InterPro" id="IPR015273">
    <property type="entry name" value="Cys-tRNA-synt_Ia_DALR"/>
</dbReference>
<dbReference type="InterPro" id="IPR024909">
    <property type="entry name" value="Cys-tRNA/MSH_ligase"/>
</dbReference>
<dbReference type="InterPro" id="IPR056411">
    <property type="entry name" value="CysS_C"/>
</dbReference>
<dbReference type="InterPro" id="IPR014729">
    <property type="entry name" value="Rossmann-like_a/b/a_fold"/>
</dbReference>
<dbReference type="InterPro" id="IPR032678">
    <property type="entry name" value="tRNA-synt_1_cat_dom"/>
</dbReference>
<dbReference type="InterPro" id="IPR009080">
    <property type="entry name" value="tRNAsynth_Ia_anticodon-bd"/>
</dbReference>
<dbReference type="NCBIfam" id="TIGR00435">
    <property type="entry name" value="cysS"/>
    <property type="match status" value="1"/>
</dbReference>
<dbReference type="PANTHER" id="PTHR10890:SF3">
    <property type="entry name" value="CYSTEINE--TRNA LIGASE, CYTOPLASMIC"/>
    <property type="match status" value="1"/>
</dbReference>
<dbReference type="PANTHER" id="PTHR10890">
    <property type="entry name" value="CYSTEINYL-TRNA SYNTHETASE"/>
    <property type="match status" value="1"/>
</dbReference>
<dbReference type="Pfam" id="PF23493">
    <property type="entry name" value="CysS_C"/>
    <property type="match status" value="1"/>
</dbReference>
<dbReference type="Pfam" id="PF09190">
    <property type="entry name" value="DALR_2"/>
    <property type="match status" value="1"/>
</dbReference>
<dbReference type="Pfam" id="PF01406">
    <property type="entry name" value="tRNA-synt_1e"/>
    <property type="match status" value="1"/>
</dbReference>
<dbReference type="PRINTS" id="PR00983">
    <property type="entry name" value="TRNASYNTHCYS"/>
</dbReference>
<dbReference type="SMART" id="SM00840">
    <property type="entry name" value="DALR_2"/>
    <property type="match status" value="1"/>
</dbReference>
<dbReference type="SUPFAM" id="SSF47323">
    <property type="entry name" value="Anticodon-binding domain of a subclass of class I aminoacyl-tRNA synthetases"/>
    <property type="match status" value="1"/>
</dbReference>
<dbReference type="SUPFAM" id="SSF52374">
    <property type="entry name" value="Nucleotidylyl transferase"/>
    <property type="match status" value="1"/>
</dbReference>
<feature type="chain" id="PRO_0000332828" description="Cysteine--tRNA ligase">
    <location>
        <begin position="1"/>
        <end position="459"/>
    </location>
</feature>
<feature type="short sequence motif" description="'HIGH' region">
    <location>
        <begin position="29"/>
        <end position="39"/>
    </location>
</feature>
<feature type="short sequence motif" description="'KMSKS' region">
    <location>
        <begin position="265"/>
        <end position="269"/>
    </location>
</feature>
<feature type="binding site" evidence="1">
    <location>
        <position position="27"/>
    </location>
    <ligand>
        <name>Zn(2+)</name>
        <dbReference type="ChEBI" id="CHEBI:29105"/>
    </ligand>
</feature>
<feature type="binding site" evidence="1">
    <location>
        <position position="208"/>
    </location>
    <ligand>
        <name>Zn(2+)</name>
        <dbReference type="ChEBI" id="CHEBI:29105"/>
    </ligand>
</feature>
<feature type="binding site" evidence="1">
    <location>
        <position position="233"/>
    </location>
    <ligand>
        <name>Zn(2+)</name>
        <dbReference type="ChEBI" id="CHEBI:29105"/>
    </ligand>
</feature>
<feature type="binding site" evidence="1">
    <location>
        <position position="237"/>
    </location>
    <ligand>
        <name>Zn(2+)</name>
        <dbReference type="ChEBI" id="CHEBI:29105"/>
    </ligand>
</feature>
<feature type="binding site" evidence="1">
    <location>
        <position position="268"/>
    </location>
    <ligand>
        <name>ATP</name>
        <dbReference type="ChEBI" id="CHEBI:30616"/>
    </ligand>
</feature>
<sequence length="459" mass="52460">MIFYNSLSGQKEQFKPIEANKIKMYACGVTVYDDCHIGHARTYIAFDVINRYFKYRGYDVTLVRNITDIDDKIIKRANENGESTTELVERNIKAMHDVFARLNILKPSKEPRATETIPEMVAMIETLIKKGYAYQGANGDVFYRVTKFADYGKLSKQNLEALQQGSRVDVVEEKENPMDFVLWKMAKEGEPAWDSPWGAGRPGWHIECSAMSKKLLGDTFDIHAGGSDLRFPHHENEIAQSEACNECTFANYWLHSGMVKVNAEKMSKSLNNFFTIVEVLEEYHPEVVRYFLASTVYRSEINYSKENLENAKASVERLFNALRDIEPIEVNLPDDASEYEEKFIKAMDNDFNTPEALAVLFSLAKEINTLKTTNKYKASGYAYLLRKLCDVLGILFTDIEEYFKQGDGVDASEIEKLIAERTQAKKDKNYARADEIRNQLQQQGIILEDSATGTTWKKG</sequence>
<keyword id="KW-0030">Aminoacyl-tRNA synthetase</keyword>
<keyword id="KW-0067">ATP-binding</keyword>
<keyword id="KW-0963">Cytoplasm</keyword>
<keyword id="KW-0436">Ligase</keyword>
<keyword id="KW-0479">Metal-binding</keyword>
<keyword id="KW-0547">Nucleotide-binding</keyword>
<keyword id="KW-0648">Protein biosynthesis</keyword>
<keyword id="KW-0862">Zinc</keyword>
<gene>
    <name evidence="1" type="primary">cysS</name>
    <name type="ordered locus">FTN_0310</name>
</gene>
<evidence type="ECO:0000255" key="1">
    <source>
        <dbReference type="HAMAP-Rule" id="MF_00041"/>
    </source>
</evidence>
<accession>A0Q4Q1</accession>
<name>SYC_FRATN</name>
<protein>
    <recommendedName>
        <fullName evidence="1">Cysteine--tRNA ligase</fullName>
        <ecNumber evidence="1">6.1.1.16</ecNumber>
    </recommendedName>
    <alternativeName>
        <fullName evidence="1">Cysteinyl-tRNA synthetase</fullName>
        <shortName evidence="1">CysRS</shortName>
    </alternativeName>
</protein>
<organism>
    <name type="scientific">Francisella tularensis subsp. novicida (strain U112)</name>
    <dbReference type="NCBI Taxonomy" id="401614"/>
    <lineage>
        <taxon>Bacteria</taxon>
        <taxon>Pseudomonadati</taxon>
        <taxon>Pseudomonadota</taxon>
        <taxon>Gammaproteobacteria</taxon>
        <taxon>Thiotrichales</taxon>
        <taxon>Francisellaceae</taxon>
        <taxon>Francisella</taxon>
    </lineage>
</organism>
<proteinExistence type="inferred from homology"/>